<proteinExistence type="inferred from homology"/>
<gene>
    <name evidence="1" type="primary">prfA</name>
    <name type="ordered locus">COSY_0676</name>
</gene>
<comment type="function">
    <text evidence="1">Peptide chain release factor 1 directs the termination of translation in response to the peptide chain termination codons UAG and UAA.</text>
</comment>
<comment type="subcellular location">
    <subcellularLocation>
        <location evidence="1">Cytoplasm</location>
    </subcellularLocation>
</comment>
<comment type="PTM">
    <text evidence="1">Methylated by PrmC. Methylation increases the termination efficiency of RF1.</text>
</comment>
<comment type="similarity">
    <text evidence="1">Belongs to the prokaryotic/mitochondrial release factor family.</text>
</comment>
<organism>
    <name type="scientific">Vesicomyosocius okutanii subsp. Calyptogena okutanii (strain HA)</name>
    <dbReference type="NCBI Taxonomy" id="412965"/>
    <lineage>
        <taxon>Bacteria</taxon>
        <taxon>Pseudomonadati</taxon>
        <taxon>Pseudomonadota</taxon>
        <taxon>Gammaproteobacteria</taxon>
        <taxon>Candidatus Pseudothioglobaceae</taxon>
        <taxon>Candidatus Vesicomyosocius</taxon>
    </lineage>
</organism>
<sequence length="361" mass="40680">MNSSILAKLEQLSIRLEEVSIMLSDPEVVSNVKKFTKLSIEYAQLTPVNQQFQTYLSHLKNLEDAQLILFEDDMEIKTMAKEEILNTKKILSQLDLKLKKSILPKDPNDSRNIIIEIRAGTGGDEASIFSGDLFKIYSRYSEKQKWTIEIISSSIGEHGGFKEIIARISGINVYSKLKFESGAHRVQRVPTTESQGRIHTSACTVAIMPEVENIEEINININDVRIDTFRASGAGGQHVNKTDSAVRITHLPTGTVVECQDGRSQHKNKAQAMSVLASRILDAQQQEQQEQQSSTRKELIGSGDRSQRIRTYNYPQGRITDHRINLTLYKLTEIMEGNLSAIIKPLIIEQQTNQLTELNNT</sequence>
<evidence type="ECO:0000255" key="1">
    <source>
        <dbReference type="HAMAP-Rule" id="MF_00093"/>
    </source>
</evidence>
<evidence type="ECO:0000256" key="2">
    <source>
        <dbReference type="SAM" id="MobiDB-lite"/>
    </source>
</evidence>
<dbReference type="EMBL" id="AP009247">
    <property type="protein sequence ID" value="BAF61788.1"/>
    <property type="molecule type" value="Genomic_DNA"/>
</dbReference>
<dbReference type="RefSeq" id="WP_011930058.1">
    <property type="nucleotide sequence ID" value="NC_009465.1"/>
</dbReference>
<dbReference type="SMR" id="A5CW65"/>
<dbReference type="STRING" id="412965.COSY_0676"/>
<dbReference type="KEGG" id="vok:COSY_0676"/>
<dbReference type="eggNOG" id="COG0216">
    <property type="taxonomic scope" value="Bacteria"/>
</dbReference>
<dbReference type="HOGENOM" id="CLU_036856_0_1_6"/>
<dbReference type="OrthoDB" id="9806673at2"/>
<dbReference type="Proteomes" id="UP000000247">
    <property type="component" value="Chromosome"/>
</dbReference>
<dbReference type="GO" id="GO:0005737">
    <property type="term" value="C:cytoplasm"/>
    <property type="evidence" value="ECO:0007669"/>
    <property type="project" value="UniProtKB-SubCell"/>
</dbReference>
<dbReference type="GO" id="GO:0016149">
    <property type="term" value="F:translation release factor activity, codon specific"/>
    <property type="evidence" value="ECO:0007669"/>
    <property type="project" value="UniProtKB-UniRule"/>
</dbReference>
<dbReference type="FunFam" id="3.30.160.20:FF:000004">
    <property type="entry name" value="Peptide chain release factor 1"/>
    <property type="match status" value="1"/>
</dbReference>
<dbReference type="FunFam" id="3.30.70.1660:FF:000002">
    <property type="entry name" value="Peptide chain release factor 1"/>
    <property type="match status" value="1"/>
</dbReference>
<dbReference type="FunFam" id="3.30.70.1660:FF:000004">
    <property type="entry name" value="Peptide chain release factor 1"/>
    <property type="match status" value="1"/>
</dbReference>
<dbReference type="Gene3D" id="3.30.160.20">
    <property type="match status" value="1"/>
</dbReference>
<dbReference type="Gene3D" id="3.30.70.1660">
    <property type="match status" value="1"/>
</dbReference>
<dbReference type="Gene3D" id="6.10.140.1950">
    <property type="match status" value="1"/>
</dbReference>
<dbReference type="HAMAP" id="MF_00093">
    <property type="entry name" value="Rel_fac_1"/>
    <property type="match status" value="1"/>
</dbReference>
<dbReference type="InterPro" id="IPR005139">
    <property type="entry name" value="PCRF"/>
</dbReference>
<dbReference type="InterPro" id="IPR000352">
    <property type="entry name" value="Pep_chain_release_fac_I"/>
</dbReference>
<dbReference type="InterPro" id="IPR045853">
    <property type="entry name" value="Pep_chain_release_fac_I_sf"/>
</dbReference>
<dbReference type="InterPro" id="IPR050057">
    <property type="entry name" value="Prokaryotic/Mito_RF"/>
</dbReference>
<dbReference type="InterPro" id="IPR004373">
    <property type="entry name" value="RF-1"/>
</dbReference>
<dbReference type="NCBIfam" id="TIGR00019">
    <property type="entry name" value="prfA"/>
    <property type="match status" value="1"/>
</dbReference>
<dbReference type="NCBIfam" id="NF001859">
    <property type="entry name" value="PRK00591.1"/>
    <property type="match status" value="1"/>
</dbReference>
<dbReference type="PANTHER" id="PTHR43804">
    <property type="entry name" value="LD18447P"/>
    <property type="match status" value="1"/>
</dbReference>
<dbReference type="PANTHER" id="PTHR43804:SF7">
    <property type="entry name" value="LD18447P"/>
    <property type="match status" value="1"/>
</dbReference>
<dbReference type="Pfam" id="PF03462">
    <property type="entry name" value="PCRF"/>
    <property type="match status" value="1"/>
</dbReference>
<dbReference type="Pfam" id="PF00472">
    <property type="entry name" value="RF-1"/>
    <property type="match status" value="1"/>
</dbReference>
<dbReference type="SMART" id="SM00937">
    <property type="entry name" value="PCRF"/>
    <property type="match status" value="1"/>
</dbReference>
<dbReference type="SUPFAM" id="SSF75620">
    <property type="entry name" value="Release factor"/>
    <property type="match status" value="1"/>
</dbReference>
<dbReference type="PROSITE" id="PS00745">
    <property type="entry name" value="RF_PROK_I"/>
    <property type="match status" value="1"/>
</dbReference>
<reference key="1">
    <citation type="journal article" date="2007" name="Curr. Biol.">
        <title>Reduced genome of the thioautotrophic intracellular symbiont in a deep-sea clam, Calyptogena okutanii.</title>
        <authorList>
            <person name="Kuwahara H."/>
            <person name="Yoshida T."/>
            <person name="Takaki Y."/>
            <person name="Shimamura S."/>
            <person name="Nishi S."/>
            <person name="Harada M."/>
            <person name="Matsuyama K."/>
            <person name="Takishita K."/>
            <person name="Kawato M."/>
            <person name="Uematsu K."/>
            <person name="Fujiwara Y."/>
            <person name="Sato T."/>
            <person name="Kato C."/>
            <person name="Kitagawa M."/>
            <person name="Kato I."/>
            <person name="Maruyama T."/>
        </authorList>
    </citation>
    <scope>NUCLEOTIDE SEQUENCE [LARGE SCALE GENOMIC DNA]</scope>
    <source>
        <strain>HA</strain>
    </source>
</reference>
<feature type="chain" id="PRO_1000004965" description="Peptide chain release factor 1">
    <location>
        <begin position="1"/>
        <end position="361"/>
    </location>
</feature>
<feature type="region of interest" description="Disordered" evidence="2">
    <location>
        <begin position="283"/>
        <end position="307"/>
    </location>
</feature>
<feature type="modified residue" description="N5-methylglutamine" evidence="1">
    <location>
        <position position="237"/>
    </location>
</feature>
<accession>A5CW65</accession>
<keyword id="KW-0963">Cytoplasm</keyword>
<keyword id="KW-0488">Methylation</keyword>
<keyword id="KW-0648">Protein biosynthesis</keyword>
<keyword id="KW-1185">Reference proteome</keyword>
<protein>
    <recommendedName>
        <fullName evidence="1">Peptide chain release factor 1</fullName>
        <shortName evidence="1">RF-1</shortName>
    </recommendedName>
</protein>
<name>RF1_VESOH</name>